<keyword id="KW-0002">3D-structure</keyword>
<keyword id="KW-0281">Fimbrium</keyword>
<keyword id="KW-0732">Signal</keyword>
<sequence length="177" mass="18818">MIKSTGALLLFAALSAGQAMASDVAFRGNLLDRPCHVSGDSLNKHVVFKTRASRDFWYPPGRSPTESFVIRLENCHATAVGKIVTLTFKGTEEALPGHLKVTGVNSGRLAIALLDTDGSSLLKPGASHNKGQGEKVTGNSLELPFGAYVVATPEALRTKSVVPGDYEATATFELTYR</sequence>
<protein>
    <recommendedName>
        <fullName>Protein PrsK</fullName>
    </recommendedName>
</protein>
<evidence type="ECO:0000255" key="1"/>
<evidence type="ECO:0000305" key="2"/>
<evidence type="ECO:0007829" key="3">
    <source>
        <dbReference type="PDB" id="1N12"/>
    </source>
</evidence>
<proteinExistence type="evidence at protein level"/>
<reference key="1">
    <citation type="journal article" date="1992" name="Mol. Microbiol.">
        <title>Horizontal gene transfer of the Escherichia coli pap and prs pili operons as a mechanism for the development of tissue-specific adhesive properties.</title>
        <authorList>
            <person name="Marklund B.-I."/>
            <person name="Tennent J.M."/>
            <person name="Garcia E."/>
            <person name="Hamers A."/>
            <person name="Baga M."/>
            <person name="Lindberg F."/>
            <person name="Gaastra W."/>
            <person name="Normark S."/>
        </authorList>
    </citation>
    <scope>NUCLEOTIDE SEQUENCE [GENOMIC DNA]</scope>
    <source>
        <strain>1442</strain>
    </source>
</reference>
<accession>P42191</accession>
<organism>
    <name type="scientific">Escherichia coli</name>
    <dbReference type="NCBI Taxonomy" id="562"/>
    <lineage>
        <taxon>Bacteria</taxon>
        <taxon>Pseudomonadati</taxon>
        <taxon>Pseudomonadota</taxon>
        <taxon>Gammaproteobacteria</taxon>
        <taxon>Enterobacterales</taxon>
        <taxon>Enterobacteriaceae</taxon>
        <taxon>Escherichia</taxon>
    </lineage>
</organism>
<dbReference type="EMBL" id="X62158">
    <property type="protein sequence ID" value="CAA44086.1"/>
    <property type="molecule type" value="Genomic_DNA"/>
</dbReference>
<dbReference type="PIR" id="S25209">
    <property type="entry name" value="S25209"/>
</dbReference>
<dbReference type="PDB" id="1N12">
    <property type="method" value="X-ray"/>
    <property type="resolution" value="1.87 A"/>
    <property type="chains" value="B/D=22-32"/>
</dbReference>
<dbReference type="PDBsum" id="1N12"/>
<dbReference type="SMR" id="P42191"/>
<dbReference type="EvolutionaryTrace" id="P42191"/>
<dbReference type="GO" id="GO:0009289">
    <property type="term" value="C:pilus"/>
    <property type="evidence" value="ECO:0007669"/>
    <property type="project" value="UniProtKB-SubCell"/>
</dbReference>
<dbReference type="GO" id="GO:0043709">
    <property type="term" value="P:cell adhesion involved in single-species biofilm formation"/>
    <property type="evidence" value="ECO:0007669"/>
    <property type="project" value="TreeGrafter"/>
</dbReference>
<dbReference type="Gene3D" id="2.60.40.1090">
    <property type="entry name" value="Fimbrial-type adhesion domain"/>
    <property type="match status" value="1"/>
</dbReference>
<dbReference type="InterPro" id="IPR000259">
    <property type="entry name" value="Adhesion_dom_fimbrial"/>
</dbReference>
<dbReference type="InterPro" id="IPR036937">
    <property type="entry name" value="Adhesion_dom_fimbrial_sf"/>
</dbReference>
<dbReference type="InterPro" id="IPR008966">
    <property type="entry name" value="Adhesion_dom_sf"/>
</dbReference>
<dbReference type="InterPro" id="IPR050263">
    <property type="entry name" value="Bact_Fimbrial_Adh_Pro"/>
</dbReference>
<dbReference type="PANTHER" id="PTHR33420:SF26">
    <property type="entry name" value="FIMBRIAL SUBUNIT"/>
    <property type="match status" value="1"/>
</dbReference>
<dbReference type="PANTHER" id="PTHR33420">
    <property type="entry name" value="FIMBRIAL SUBUNIT ELFA-RELATED"/>
    <property type="match status" value="1"/>
</dbReference>
<dbReference type="Pfam" id="PF00419">
    <property type="entry name" value="Fimbrial"/>
    <property type="match status" value="1"/>
</dbReference>
<dbReference type="SUPFAM" id="SSF49401">
    <property type="entry name" value="Bacterial adhesins"/>
    <property type="match status" value="1"/>
</dbReference>
<feature type="signal peptide" evidence="1">
    <location>
        <begin position="1"/>
        <end position="21"/>
    </location>
</feature>
<feature type="chain" id="PRO_0000022157" description="Protein PrsK">
    <location>
        <begin position="22"/>
        <end position="177"/>
    </location>
</feature>
<feature type="strand" evidence="3">
    <location>
        <begin position="23"/>
        <end position="31"/>
    </location>
</feature>
<name>PRSK_ECOLX</name>
<gene>
    <name type="primary">prsK</name>
</gene>
<comment type="subcellular location">
    <subcellularLocation>
        <location evidence="2">Fimbrium</location>
    </subcellularLocation>
</comment>